<sequence length="424" mass="45434">MFDVVISDIEAREILDSRGYPTLCVKVITNTGTFGEACVPSGASTGIKEALELRDKDPKRYQGKGVLQAISNVEKVLVPALQGFSVFDQITADAIMIDADGTPNKEKLGANAILGVSLALAKAAANTLQRPLYRYLGGSFSHVLPCPMMNLINGGMHATNGLQFQEFMIRPISAPSLKEAVRMGAEVFNALKKILQNRQLATGVGDEGGFAPNLASNAEALDLLLTAIETAGFTPREDISLALDCAASSFYNTQDKTYDGKSYADQVGILAELCEHYPIDSIEDGLAEEDFEGWKLLSETLGDRVQLVGDDLFVTNSALIAEGIAQGLANAVLIKPNQIGTLTETAEAIRLATIQGYATILSHRSGETEDTTIADLAVAFNTGQIKTGSLSRSERIAKYNRLMAIEEEMGPEALFQDSNPFSKA</sequence>
<accession>B0BA40</accession>
<protein>
    <recommendedName>
        <fullName evidence="1">Enolase</fullName>
        <ecNumber evidence="1">4.2.1.11</ecNumber>
    </recommendedName>
    <alternativeName>
        <fullName evidence="1">2-phospho-D-glycerate hydro-lyase</fullName>
    </alternativeName>
    <alternativeName>
        <fullName evidence="1">2-phosphoglycerate dehydratase</fullName>
    </alternativeName>
</protein>
<reference key="1">
    <citation type="journal article" date="2008" name="Genome Res.">
        <title>Chlamydia trachomatis: genome sequence analysis of lymphogranuloma venereum isolates.</title>
        <authorList>
            <person name="Thomson N.R."/>
            <person name="Holden M.T.G."/>
            <person name="Carder C."/>
            <person name="Lennard N."/>
            <person name="Lockey S.J."/>
            <person name="Marsh P."/>
            <person name="Skipp P."/>
            <person name="O'Connor C.D."/>
            <person name="Goodhead I."/>
            <person name="Norbertzcak H."/>
            <person name="Harris B."/>
            <person name="Ormond D."/>
            <person name="Rance R."/>
            <person name="Quail M.A."/>
            <person name="Parkhill J."/>
            <person name="Stephens R.S."/>
            <person name="Clarke I.N."/>
        </authorList>
    </citation>
    <scope>NUCLEOTIDE SEQUENCE [LARGE SCALE GENOMIC DNA]</scope>
    <source>
        <strain>UCH-1/proctitis</strain>
    </source>
</reference>
<reference evidence="2" key="2">
    <citation type="submission" date="2019-02" db="PDB data bank">
        <title>Crystal Structure of Enolase from Chlamydia trachomatis.</title>
        <authorList>
            <person name="Dranow D.M."/>
            <person name="Mayclin S.J."/>
            <person name="Lorimer D.D."/>
            <person name="Horanyi P.S."/>
            <person name="Edwards T.E."/>
        </authorList>
    </citation>
    <scope>X-RAY CRYSTALLOGRAPHY (1.80 ANGSTROMS) IN COMPLEX WITH MG(2+)</scope>
    <source>
        <strain>UCH-1/proctitis</strain>
    </source>
</reference>
<dbReference type="EC" id="4.2.1.11" evidence="1"/>
<dbReference type="EMBL" id="AM884177">
    <property type="protein sequence ID" value="CAP07241.1"/>
    <property type="molecule type" value="Genomic_DNA"/>
</dbReference>
<dbReference type="RefSeq" id="WP_009873920.1">
    <property type="nucleotide sequence ID" value="NC_010280.2"/>
</dbReference>
<dbReference type="PDB" id="6O4N">
    <property type="method" value="X-ray"/>
    <property type="resolution" value="1.80 A"/>
    <property type="chains" value="A/B=1-424"/>
</dbReference>
<dbReference type="PDBsum" id="6O4N"/>
<dbReference type="SMR" id="B0BA40"/>
<dbReference type="KEGG" id="ctl:CTLon_0844"/>
<dbReference type="HOGENOM" id="CLU_031223_2_1_0"/>
<dbReference type="UniPathway" id="UPA00109">
    <property type="reaction ID" value="UER00187"/>
</dbReference>
<dbReference type="Proteomes" id="UP001154401">
    <property type="component" value="Chromosome"/>
</dbReference>
<dbReference type="GO" id="GO:0009986">
    <property type="term" value="C:cell surface"/>
    <property type="evidence" value="ECO:0007669"/>
    <property type="project" value="UniProtKB-SubCell"/>
</dbReference>
<dbReference type="GO" id="GO:0005576">
    <property type="term" value="C:extracellular region"/>
    <property type="evidence" value="ECO:0007669"/>
    <property type="project" value="UniProtKB-SubCell"/>
</dbReference>
<dbReference type="GO" id="GO:0000015">
    <property type="term" value="C:phosphopyruvate hydratase complex"/>
    <property type="evidence" value="ECO:0007669"/>
    <property type="project" value="InterPro"/>
</dbReference>
<dbReference type="GO" id="GO:0000287">
    <property type="term" value="F:magnesium ion binding"/>
    <property type="evidence" value="ECO:0007669"/>
    <property type="project" value="UniProtKB-UniRule"/>
</dbReference>
<dbReference type="GO" id="GO:0004634">
    <property type="term" value="F:phosphopyruvate hydratase activity"/>
    <property type="evidence" value="ECO:0007669"/>
    <property type="project" value="UniProtKB-UniRule"/>
</dbReference>
<dbReference type="GO" id="GO:0006096">
    <property type="term" value="P:glycolytic process"/>
    <property type="evidence" value="ECO:0007669"/>
    <property type="project" value="UniProtKB-UniRule"/>
</dbReference>
<dbReference type="CDD" id="cd03313">
    <property type="entry name" value="enolase"/>
    <property type="match status" value="1"/>
</dbReference>
<dbReference type="Gene3D" id="3.20.20.120">
    <property type="entry name" value="Enolase-like C-terminal domain"/>
    <property type="match status" value="1"/>
</dbReference>
<dbReference type="Gene3D" id="3.30.390.10">
    <property type="entry name" value="Enolase-like, N-terminal domain"/>
    <property type="match status" value="1"/>
</dbReference>
<dbReference type="HAMAP" id="MF_00318">
    <property type="entry name" value="Enolase"/>
    <property type="match status" value="1"/>
</dbReference>
<dbReference type="InterPro" id="IPR000941">
    <property type="entry name" value="Enolase"/>
</dbReference>
<dbReference type="InterPro" id="IPR036849">
    <property type="entry name" value="Enolase-like_C_sf"/>
</dbReference>
<dbReference type="InterPro" id="IPR029017">
    <property type="entry name" value="Enolase-like_N"/>
</dbReference>
<dbReference type="InterPro" id="IPR020810">
    <property type="entry name" value="Enolase_C"/>
</dbReference>
<dbReference type="InterPro" id="IPR020809">
    <property type="entry name" value="Enolase_CS"/>
</dbReference>
<dbReference type="InterPro" id="IPR020811">
    <property type="entry name" value="Enolase_N"/>
</dbReference>
<dbReference type="NCBIfam" id="TIGR01060">
    <property type="entry name" value="eno"/>
    <property type="match status" value="1"/>
</dbReference>
<dbReference type="PANTHER" id="PTHR11902">
    <property type="entry name" value="ENOLASE"/>
    <property type="match status" value="1"/>
</dbReference>
<dbReference type="PANTHER" id="PTHR11902:SF1">
    <property type="entry name" value="ENOLASE"/>
    <property type="match status" value="1"/>
</dbReference>
<dbReference type="Pfam" id="PF00113">
    <property type="entry name" value="Enolase_C"/>
    <property type="match status" value="1"/>
</dbReference>
<dbReference type="Pfam" id="PF03952">
    <property type="entry name" value="Enolase_N"/>
    <property type="match status" value="1"/>
</dbReference>
<dbReference type="PIRSF" id="PIRSF001400">
    <property type="entry name" value="Enolase"/>
    <property type="match status" value="1"/>
</dbReference>
<dbReference type="PRINTS" id="PR00148">
    <property type="entry name" value="ENOLASE"/>
</dbReference>
<dbReference type="SFLD" id="SFLDS00001">
    <property type="entry name" value="Enolase"/>
    <property type="match status" value="1"/>
</dbReference>
<dbReference type="SFLD" id="SFLDF00002">
    <property type="entry name" value="enolase"/>
    <property type="match status" value="1"/>
</dbReference>
<dbReference type="SMART" id="SM01192">
    <property type="entry name" value="Enolase_C"/>
    <property type="match status" value="1"/>
</dbReference>
<dbReference type="SMART" id="SM01193">
    <property type="entry name" value="Enolase_N"/>
    <property type="match status" value="1"/>
</dbReference>
<dbReference type="SUPFAM" id="SSF51604">
    <property type="entry name" value="Enolase C-terminal domain-like"/>
    <property type="match status" value="1"/>
</dbReference>
<dbReference type="SUPFAM" id="SSF54826">
    <property type="entry name" value="Enolase N-terminal domain-like"/>
    <property type="match status" value="1"/>
</dbReference>
<dbReference type="PROSITE" id="PS00164">
    <property type="entry name" value="ENOLASE"/>
    <property type="match status" value="1"/>
</dbReference>
<evidence type="ECO:0000255" key="1">
    <source>
        <dbReference type="HAMAP-Rule" id="MF_00318"/>
    </source>
</evidence>
<evidence type="ECO:0007744" key="2">
    <source>
        <dbReference type="PDB" id="6O4N"/>
    </source>
</evidence>
<evidence type="ECO:0007829" key="3">
    <source>
        <dbReference type="PDB" id="6O4N"/>
    </source>
</evidence>
<keyword id="KW-0002">3D-structure</keyword>
<keyword id="KW-0963">Cytoplasm</keyword>
<keyword id="KW-0324">Glycolysis</keyword>
<keyword id="KW-0456">Lyase</keyword>
<keyword id="KW-0460">Magnesium</keyword>
<keyword id="KW-0479">Metal-binding</keyword>
<keyword id="KW-0964">Secreted</keyword>
<name>ENO_CHLTB</name>
<gene>
    <name evidence="1" type="primary">eno</name>
    <name type="ordered locus">CTLon_0844</name>
</gene>
<comment type="function">
    <text evidence="1">Catalyzes the reversible conversion of 2-phosphoglycerate (2-PG) into phosphoenolpyruvate (PEP). It is essential for the degradation of carbohydrates via glycolysis.</text>
</comment>
<comment type="catalytic activity">
    <reaction evidence="1">
        <text>(2R)-2-phosphoglycerate = phosphoenolpyruvate + H2O</text>
        <dbReference type="Rhea" id="RHEA:10164"/>
        <dbReference type="ChEBI" id="CHEBI:15377"/>
        <dbReference type="ChEBI" id="CHEBI:58289"/>
        <dbReference type="ChEBI" id="CHEBI:58702"/>
        <dbReference type="EC" id="4.2.1.11"/>
    </reaction>
</comment>
<comment type="cofactor">
    <cofactor evidence="1 2">
        <name>Mg(2+)</name>
        <dbReference type="ChEBI" id="CHEBI:18420"/>
    </cofactor>
    <text evidence="1">Binds a second Mg(2+) ion via substrate during catalysis.</text>
</comment>
<comment type="pathway">
    <text evidence="1">Carbohydrate degradation; glycolysis; pyruvate from D-glyceraldehyde 3-phosphate: step 4/5.</text>
</comment>
<comment type="subcellular location">
    <subcellularLocation>
        <location evidence="1">Cytoplasm</location>
    </subcellularLocation>
    <subcellularLocation>
        <location evidence="1">Secreted</location>
    </subcellularLocation>
    <subcellularLocation>
        <location evidence="1">Cell surface</location>
    </subcellularLocation>
    <text evidence="1">Fractions of enolase are present in both the cytoplasm and on the cell surface.</text>
</comment>
<comment type="similarity">
    <text evidence="1">Belongs to the enolase family.</text>
</comment>
<proteinExistence type="evidence at protein level"/>
<organism>
    <name type="scientific">Chlamydia trachomatis serovar L2b (strain UCH-1/proctitis)</name>
    <dbReference type="NCBI Taxonomy" id="471473"/>
    <lineage>
        <taxon>Bacteria</taxon>
        <taxon>Pseudomonadati</taxon>
        <taxon>Chlamydiota</taxon>
        <taxon>Chlamydiia</taxon>
        <taxon>Chlamydiales</taxon>
        <taxon>Chlamydiaceae</taxon>
        <taxon>Chlamydia/Chlamydophila group</taxon>
        <taxon>Chlamydia</taxon>
    </lineage>
</organism>
<feature type="chain" id="PRO_1000115848" description="Enolase">
    <location>
        <begin position="1"/>
        <end position="424"/>
    </location>
</feature>
<feature type="active site" description="Proton donor" evidence="1">
    <location>
        <position position="207"/>
    </location>
</feature>
<feature type="active site" description="Proton acceptor" evidence="1">
    <location>
        <position position="335"/>
    </location>
</feature>
<feature type="binding site" evidence="1">
    <location>
        <position position="165"/>
    </location>
    <ligand>
        <name>(2R)-2-phosphoglycerate</name>
        <dbReference type="ChEBI" id="CHEBI:58289"/>
    </ligand>
</feature>
<feature type="binding site" evidence="1 2">
    <location>
        <position position="244"/>
    </location>
    <ligand>
        <name>Mg(2+)</name>
        <dbReference type="ChEBI" id="CHEBI:18420"/>
    </ligand>
</feature>
<feature type="binding site" evidence="1 2">
    <location>
        <position position="283"/>
    </location>
    <ligand>
        <name>Mg(2+)</name>
        <dbReference type="ChEBI" id="CHEBI:18420"/>
    </ligand>
</feature>
<feature type="binding site" evidence="1 2">
    <location>
        <position position="310"/>
    </location>
    <ligand>
        <name>Mg(2+)</name>
        <dbReference type="ChEBI" id="CHEBI:18420"/>
    </ligand>
</feature>
<feature type="binding site" evidence="1">
    <location>
        <position position="335"/>
    </location>
    <ligand>
        <name>(2R)-2-phosphoglycerate</name>
        <dbReference type="ChEBI" id="CHEBI:58289"/>
    </ligand>
</feature>
<feature type="binding site" evidence="1">
    <location>
        <position position="364"/>
    </location>
    <ligand>
        <name>(2R)-2-phosphoglycerate</name>
        <dbReference type="ChEBI" id="CHEBI:58289"/>
    </ligand>
</feature>
<feature type="binding site" evidence="1">
    <location>
        <position position="365"/>
    </location>
    <ligand>
        <name>(2R)-2-phosphoglycerate</name>
        <dbReference type="ChEBI" id="CHEBI:58289"/>
    </ligand>
</feature>
<feature type="binding site" evidence="1">
    <location>
        <position position="386"/>
    </location>
    <ligand>
        <name>(2R)-2-phosphoglycerate</name>
        <dbReference type="ChEBI" id="CHEBI:58289"/>
    </ligand>
</feature>
<feature type="strand" evidence="3">
    <location>
        <begin position="5"/>
        <end position="15"/>
    </location>
</feature>
<feature type="strand" evidence="3">
    <location>
        <begin position="21"/>
        <end position="29"/>
    </location>
</feature>
<feature type="strand" evidence="3">
    <location>
        <begin position="34"/>
        <end position="38"/>
    </location>
</feature>
<feature type="helix" evidence="3">
    <location>
        <begin position="61"/>
        <end position="63"/>
    </location>
</feature>
<feature type="helix" evidence="3">
    <location>
        <begin position="67"/>
        <end position="75"/>
    </location>
</feature>
<feature type="helix" evidence="3">
    <location>
        <begin position="77"/>
        <end position="81"/>
    </location>
</feature>
<feature type="helix" evidence="3">
    <location>
        <begin position="89"/>
        <end position="100"/>
    </location>
</feature>
<feature type="turn" evidence="3">
    <location>
        <begin position="106"/>
        <end position="108"/>
    </location>
</feature>
<feature type="helix" evidence="3">
    <location>
        <begin position="110"/>
        <end position="128"/>
    </location>
</feature>
<feature type="helix" evidence="3">
    <location>
        <begin position="132"/>
        <end position="137"/>
    </location>
</feature>
<feature type="strand" evidence="3">
    <location>
        <begin position="149"/>
        <end position="153"/>
    </location>
</feature>
<feature type="helix" evidence="3">
    <location>
        <begin position="155"/>
        <end position="157"/>
    </location>
</feature>
<feature type="strand" evidence="3">
    <location>
        <begin position="163"/>
        <end position="170"/>
    </location>
</feature>
<feature type="helix" evidence="3">
    <location>
        <begin position="177"/>
        <end position="197"/>
    </location>
</feature>
<feature type="strand" evidence="3">
    <location>
        <begin position="208"/>
        <end position="210"/>
    </location>
</feature>
<feature type="helix" evidence="3">
    <location>
        <begin position="217"/>
        <end position="230"/>
    </location>
</feature>
<feature type="turn" evidence="3">
    <location>
        <begin position="236"/>
        <end position="238"/>
    </location>
</feature>
<feature type="strand" evidence="3">
    <location>
        <begin position="239"/>
        <end position="244"/>
    </location>
</feature>
<feature type="helix" evidence="3">
    <location>
        <begin position="247"/>
        <end position="250"/>
    </location>
</feature>
<feature type="turn" evidence="3">
    <location>
        <begin position="253"/>
        <end position="256"/>
    </location>
</feature>
<feature type="helix" evidence="3">
    <location>
        <begin position="263"/>
        <end position="276"/>
    </location>
</feature>
<feature type="strand" evidence="3">
    <location>
        <begin position="279"/>
        <end position="284"/>
    </location>
</feature>
<feature type="helix" evidence="3">
    <location>
        <begin position="291"/>
        <end position="301"/>
    </location>
</feature>
<feature type="turn" evidence="3">
    <location>
        <begin position="302"/>
        <end position="304"/>
    </location>
</feature>
<feature type="strand" evidence="3">
    <location>
        <begin position="305"/>
        <end position="310"/>
    </location>
</feature>
<feature type="turn" evidence="3">
    <location>
        <begin position="311"/>
        <end position="315"/>
    </location>
</feature>
<feature type="helix" evidence="3">
    <location>
        <begin position="317"/>
        <end position="325"/>
    </location>
</feature>
<feature type="strand" evidence="3">
    <location>
        <begin position="330"/>
        <end position="334"/>
    </location>
</feature>
<feature type="helix" evidence="3">
    <location>
        <begin position="336"/>
        <end position="338"/>
    </location>
</feature>
<feature type="helix" evidence="3">
    <location>
        <begin position="342"/>
        <end position="353"/>
    </location>
</feature>
<feature type="turn" evidence="3">
    <location>
        <begin position="354"/>
        <end position="356"/>
    </location>
</feature>
<feature type="strand" evidence="3">
    <location>
        <begin position="358"/>
        <end position="362"/>
    </location>
</feature>
<feature type="helix" evidence="3">
    <location>
        <begin position="372"/>
        <end position="379"/>
    </location>
</feature>
<feature type="strand" evidence="3">
    <location>
        <begin position="383"/>
        <end position="386"/>
    </location>
</feature>
<feature type="strand" evidence="3">
    <location>
        <begin position="390"/>
        <end position="392"/>
    </location>
</feature>
<feature type="helix" evidence="3">
    <location>
        <begin position="393"/>
        <end position="409"/>
    </location>
</feature>
<feature type="helix" evidence="3">
    <location>
        <begin position="410"/>
        <end position="412"/>
    </location>
</feature>